<organism>
    <name type="scientific">Homo sapiens</name>
    <name type="common">Human</name>
    <dbReference type="NCBI Taxonomy" id="9606"/>
    <lineage>
        <taxon>Eukaryota</taxon>
        <taxon>Metazoa</taxon>
        <taxon>Chordata</taxon>
        <taxon>Craniata</taxon>
        <taxon>Vertebrata</taxon>
        <taxon>Euteleostomi</taxon>
        <taxon>Mammalia</taxon>
        <taxon>Eutheria</taxon>
        <taxon>Euarchontoglires</taxon>
        <taxon>Primates</taxon>
        <taxon>Haplorrhini</taxon>
        <taxon>Catarrhini</taxon>
        <taxon>Hominidae</taxon>
        <taxon>Homo</taxon>
    </lineage>
</organism>
<keyword id="KW-0966">Cell projection</keyword>
<keyword id="KW-0649">Protein kinase inhibitor</keyword>
<keyword id="KW-1267">Proteomics identification</keyword>
<keyword id="KW-1185">Reference proteome</keyword>
<keyword id="KW-0770">Synapse</keyword>
<proteinExistence type="evidence at protein level"/>
<comment type="function">
    <text evidence="1 2">Potent and specific inhibitor of CaM-kinase II (CAMK2) (By similarity). Plays a role in the maintenance of long-term retrieval-induced memory in response to contextual fear (By similarity). Modulates blood pressure and vascular reactivity via regulation of CAMK2 activity in addition to regulation of left ventricular mass (By similarity). Mediates the NLRP3 inflammasome in cardiomyocytes via acting as an inhibitor of the MAPK14/p38 and MAPK8/JNK pathways, thereby regulating ventricular remodeling and cardiac rhythm post-myocardial infarction (By similarity). Negatively effects insulin sensitivity and promotes lipid formation in adipose tissues independent of CAMK2 signaling (By similarity).</text>
</comment>
<comment type="subunit">
    <text evidence="2">Interacts with CAMK2B; the presence of Ca(2+)/calmodulin increases the interaction but is not essential (By similarity). Interacts with CAMK2A; this interaction requires CAMK2A activation by Ca(2+) (By similarity).</text>
</comment>
<comment type="subcellular location">
    <subcellularLocation>
        <location evidence="1">Synapse</location>
    </subcellularLocation>
    <subcellularLocation>
        <location evidence="2">Cell projection</location>
        <location evidence="2">Dendrite</location>
    </subcellularLocation>
    <subcellularLocation>
        <location evidence="1">Postsynaptic density</location>
    </subcellularLocation>
</comment>
<comment type="similarity">
    <text evidence="3">Belongs to the CAMK2N family.</text>
</comment>
<comment type="caution">
    <text evidence="4 5">There was previous evidence showing expression across a broad range of tissues. However this paper was retracted as immunoblot data was viewed as unreliable.</text>
</comment>
<name>CK2N1_HUMAN</name>
<feature type="chain" id="PRO_0000338393" description="Calcium/calmodulin-dependent protein kinase II inhibitor 1">
    <location>
        <begin position="1"/>
        <end position="78"/>
    </location>
</feature>
<feature type="region of interest" description="CAMK2 inhibitory domain">
    <location>
        <begin position="41"/>
        <end position="68"/>
    </location>
</feature>
<accession>Q7Z7J9</accession>
<protein>
    <recommendedName>
        <fullName>Calcium/calmodulin-dependent protein kinase II inhibitor 1</fullName>
    </recommendedName>
    <alternativeName>
        <fullName>CaMKII inhibitory protein alpha</fullName>
        <shortName>CaMKIIN-alpha</shortName>
    </alternativeName>
</protein>
<reference key="1">
    <citation type="journal article" date="2008" name="J. Biol. Chem.">
        <title>A novel endogenous human CaMKII inhibitory protein suppresses tumor growth by inducing cell cycle arrest via p27 stabilization.</title>
        <authorList>
            <person name="Wang C."/>
            <person name="Li N."/>
            <person name="Liu X."/>
            <person name="Zheng Y."/>
            <person name="Cao X."/>
        </authorList>
    </citation>
    <scope>RETRACTED PAPER</scope>
    <source>
        <tissue>Bone marrow stroma</tissue>
    </source>
</reference>
<reference key="2">
    <citation type="journal article" date="2021" name="J. Biol. Chem.">
        <authorList>
            <person name="Wang C."/>
            <person name="Li N."/>
            <person name="Liu X."/>
            <person name="Zheng Y."/>
            <person name="Cao X."/>
        </authorList>
    </citation>
    <scope>RETRACTION NOTICE OF PUBMED:18305109</scope>
</reference>
<reference key="3">
    <citation type="journal article" date="2006" name="Nature">
        <title>The DNA sequence and biological annotation of human chromosome 1.</title>
        <authorList>
            <person name="Gregory S.G."/>
            <person name="Barlow K.F."/>
            <person name="McLay K.E."/>
            <person name="Kaul R."/>
            <person name="Swarbreck D."/>
            <person name="Dunham A."/>
            <person name="Scott C.E."/>
            <person name="Howe K.L."/>
            <person name="Woodfine K."/>
            <person name="Spencer C.C.A."/>
            <person name="Jones M.C."/>
            <person name="Gillson C."/>
            <person name="Searle S."/>
            <person name="Zhou Y."/>
            <person name="Kokocinski F."/>
            <person name="McDonald L."/>
            <person name="Evans R."/>
            <person name="Phillips K."/>
            <person name="Atkinson A."/>
            <person name="Cooper R."/>
            <person name="Jones C."/>
            <person name="Hall R.E."/>
            <person name="Andrews T.D."/>
            <person name="Lloyd C."/>
            <person name="Ainscough R."/>
            <person name="Almeida J.P."/>
            <person name="Ambrose K.D."/>
            <person name="Anderson F."/>
            <person name="Andrew R.W."/>
            <person name="Ashwell R.I.S."/>
            <person name="Aubin K."/>
            <person name="Babbage A.K."/>
            <person name="Bagguley C.L."/>
            <person name="Bailey J."/>
            <person name="Beasley H."/>
            <person name="Bethel G."/>
            <person name="Bird C.P."/>
            <person name="Bray-Allen S."/>
            <person name="Brown J.Y."/>
            <person name="Brown A.J."/>
            <person name="Buckley D."/>
            <person name="Burton J."/>
            <person name="Bye J."/>
            <person name="Carder C."/>
            <person name="Chapman J.C."/>
            <person name="Clark S.Y."/>
            <person name="Clarke G."/>
            <person name="Clee C."/>
            <person name="Cobley V."/>
            <person name="Collier R.E."/>
            <person name="Corby N."/>
            <person name="Coville G.J."/>
            <person name="Davies J."/>
            <person name="Deadman R."/>
            <person name="Dunn M."/>
            <person name="Earthrowl M."/>
            <person name="Ellington A.G."/>
            <person name="Errington H."/>
            <person name="Frankish A."/>
            <person name="Frankland J."/>
            <person name="French L."/>
            <person name="Garner P."/>
            <person name="Garnett J."/>
            <person name="Gay L."/>
            <person name="Ghori M.R.J."/>
            <person name="Gibson R."/>
            <person name="Gilby L.M."/>
            <person name="Gillett W."/>
            <person name="Glithero R.J."/>
            <person name="Grafham D.V."/>
            <person name="Griffiths C."/>
            <person name="Griffiths-Jones S."/>
            <person name="Grocock R."/>
            <person name="Hammond S."/>
            <person name="Harrison E.S.I."/>
            <person name="Hart E."/>
            <person name="Haugen E."/>
            <person name="Heath P.D."/>
            <person name="Holmes S."/>
            <person name="Holt K."/>
            <person name="Howden P.J."/>
            <person name="Hunt A.R."/>
            <person name="Hunt S.E."/>
            <person name="Hunter G."/>
            <person name="Isherwood J."/>
            <person name="James R."/>
            <person name="Johnson C."/>
            <person name="Johnson D."/>
            <person name="Joy A."/>
            <person name="Kay M."/>
            <person name="Kershaw J.K."/>
            <person name="Kibukawa M."/>
            <person name="Kimberley A.M."/>
            <person name="King A."/>
            <person name="Knights A.J."/>
            <person name="Lad H."/>
            <person name="Laird G."/>
            <person name="Lawlor S."/>
            <person name="Leongamornlert D.A."/>
            <person name="Lloyd D.M."/>
            <person name="Loveland J."/>
            <person name="Lovell J."/>
            <person name="Lush M.J."/>
            <person name="Lyne R."/>
            <person name="Martin S."/>
            <person name="Mashreghi-Mohammadi M."/>
            <person name="Matthews L."/>
            <person name="Matthews N.S.W."/>
            <person name="McLaren S."/>
            <person name="Milne S."/>
            <person name="Mistry S."/>
            <person name="Moore M.J.F."/>
            <person name="Nickerson T."/>
            <person name="O'Dell C.N."/>
            <person name="Oliver K."/>
            <person name="Palmeiri A."/>
            <person name="Palmer S.A."/>
            <person name="Parker A."/>
            <person name="Patel D."/>
            <person name="Pearce A.V."/>
            <person name="Peck A.I."/>
            <person name="Pelan S."/>
            <person name="Phelps K."/>
            <person name="Phillimore B.J."/>
            <person name="Plumb R."/>
            <person name="Rajan J."/>
            <person name="Raymond C."/>
            <person name="Rouse G."/>
            <person name="Saenphimmachak C."/>
            <person name="Sehra H.K."/>
            <person name="Sheridan E."/>
            <person name="Shownkeen R."/>
            <person name="Sims S."/>
            <person name="Skuce C.D."/>
            <person name="Smith M."/>
            <person name="Steward C."/>
            <person name="Subramanian S."/>
            <person name="Sycamore N."/>
            <person name="Tracey A."/>
            <person name="Tromans A."/>
            <person name="Van Helmond Z."/>
            <person name="Wall M."/>
            <person name="Wallis J.M."/>
            <person name="White S."/>
            <person name="Whitehead S.L."/>
            <person name="Wilkinson J.E."/>
            <person name="Willey D.L."/>
            <person name="Williams H."/>
            <person name="Wilming L."/>
            <person name="Wray P.W."/>
            <person name="Wu Z."/>
            <person name="Coulson A."/>
            <person name="Vaudin M."/>
            <person name="Sulston J.E."/>
            <person name="Durbin R.M."/>
            <person name="Hubbard T."/>
            <person name="Wooster R."/>
            <person name="Dunham I."/>
            <person name="Carter N.P."/>
            <person name="McVean G."/>
            <person name="Ross M.T."/>
            <person name="Harrow J."/>
            <person name="Olson M.V."/>
            <person name="Beck S."/>
            <person name="Rogers J."/>
            <person name="Bentley D.R."/>
        </authorList>
    </citation>
    <scope>NUCLEOTIDE SEQUENCE [LARGE SCALE GENOMIC DNA]</scope>
</reference>
<reference key="4">
    <citation type="submission" date="2005-07" db="EMBL/GenBank/DDBJ databases">
        <authorList>
            <person name="Mural R.J."/>
            <person name="Istrail S."/>
            <person name="Sutton G.G."/>
            <person name="Florea L."/>
            <person name="Halpern A.L."/>
            <person name="Mobarry C.M."/>
            <person name="Lippert R."/>
            <person name="Walenz B."/>
            <person name="Shatkay H."/>
            <person name="Dew I."/>
            <person name="Miller J.R."/>
            <person name="Flanigan M.J."/>
            <person name="Edwards N.J."/>
            <person name="Bolanos R."/>
            <person name="Fasulo D."/>
            <person name="Halldorsson B.V."/>
            <person name="Hannenhalli S."/>
            <person name="Turner R."/>
            <person name="Yooseph S."/>
            <person name="Lu F."/>
            <person name="Nusskern D.R."/>
            <person name="Shue B.C."/>
            <person name="Zheng X.H."/>
            <person name="Zhong F."/>
            <person name="Delcher A.L."/>
            <person name="Huson D.H."/>
            <person name="Kravitz S.A."/>
            <person name="Mouchard L."/>
            <person name="Reinert K."/>
            <person name="Remington K.A."/>
            <person name="Clark A.G."/>
            <person name="Waterman M.S."/>
            <person name="Eichler E.E."/>
            <person name="Adams M.D."/>
            <person name="Hunkapiller M.W."/>
            <person name="Myers E.W."/>
            <person name="Venter J.C."/>
        </authorList>
    </citation>
    <scope>NUCLEOTIDE SEQUENCE [LARGE SCALE GENOMIC DNA]</scope>
</reference>
<sequence length="78" mass="8553">MSEVLPYGDEKLSPYGDGGDVGQIFSCRLQDTNNFFGAGQNKRPPKLGQIGRSKRVVIEDDRIDDVLKNMTDKAPPGV</sequence>
<dbReference type="EMBL" id="AY204901">
    <property type="protein sequence ID" value="AAO49802.1"/>
    <property type="molecule type" value="mRNA"/>
</dbReference>
<dbReference type="EMBL" id="AL391357">
    <property type="status" value="NOT_ANNOTATED_CDS"/>
    <property type="molecule type" value="Genomic_DNA"/>
</dbReference>
<dbReference type="EMBL" id="CH471134">
    <property type="protein sequence ID" value="EAW94923.1"/>
    <property type="molecule type" value="Genomic_DNA"/>
</dbReference>
<dbReference type="CCDS" id="CCDS207.1"/>
<dbReference type="RefSeq" id="NP_061054.2">
    <property type="nucleotide sequence ID" value="NM_018584.5"/>
</dbReference>
<dbReference type="BioGRID" id="120671">
    <property type="interactions" value="8"/>
</dbReference>
<dbReference type="FunCoup" id="Q7Z7J9">
    <property type="interactions" value="56"/>
</dbReference>
<dbReference type="IntAct" id="Q7Z7J9">
    <property type="interactions" value="3"/>
</dbReference>
<dbReference type="STRING" id="9606.ENSP00000364219"/>
<dbReference type="iPTMnet" id="Q7Z7J9"/>
<dbReference type="PhosphoSitePlus" id="Q7Z7J9"/>
<dbReference type="BioMuta" id="CAMK2N1"/>
<dbReference type="MassIVE" id="Q7Z7J9"/>
<dbReference type="PaxDb" id="9606-ENSP00000364219"/>
<dbReference type="PeptideAtlas" id="Q7Z7J9"/>
<dbReference type="ProteomicsDB" id="69554"/>
<dbReference type="Antibodypedia" id="53235">
    <property type="antibodies" value="73 antibodies from 16 providers"/>
</dbReference>
<dbReference type="DNASU" id="55450"/>
<dbReference type="Ensembl" id="ENST00000375078.4">
    <property type="protein sequence ID" value="ENSP00000364219.3"/>
    <property type="gene ID" value="ENSG00000162545.6"/>
</dbReference>
<dbReference type="GeneID" id="55450"/>
<dbReference type="KEGG" id="hsa:55450"/>
<dbReference type="MANE-Select" id="ENST00000375078.4">
    <property type="protein sequence ID" value="ENSP00000364219.3"/>
    <property type="RefSeq nucleotide sequence ID" value="NM_018584.6"/>
    <property type="RefSeq protein sequence ID" value="NP_061054.2"/>
</dbReference>
<dbReference type="UCSC" id="uc001bdh.4">
    <property type="organism name" value="human"/>
</dbReference>
<dbReference type="AGR" id="HGNC:24190"/>
<dbReference type="CTD" id="55450"/>
<dbReference type="DisGeNET" id="55450"/>
<dbReference type="GeneCards" id="CAMK2N1"/>
<dbReference type="HGNC" id="HGNC:24190">
    <property type="gene designation" value="CAMK2N1"/>
</dbReference>
<dbReference type="HPA" id="ENSG00000162545">
    <property type="expression patterns" value="Tissue enriched (brain)"/>
</dbReference>
<dbReference type="MIM" id="614986">
    <property type="type" value="gene"/>
</dbReference>
<dbReference type="neXtProt" id="NX_Q7Z7J9"/>
<dbReference type="OpenTargets" id="ENSG00000162545"/>
<dbReference type="PharmGKB" id="PA142672209"/>
<dbReference type="VEuPathDB" id="HostDB:ENSG00000162545"/>
<dbReference type="eggNOG" id="ENOG502S6QW">
    <property type="taxonomic scope" value="Eukaryota"/>
</dbReference>
<dbReference type="GeneTree" id="ENSGT00390000004940"/>
<dbReference type="HOGENOM" id="CLU_197183_0_0_1"/>
<dbReference type="InParanoid" id="Q7Z7J9"/>
<dbReference type="OMA" id="DENITHY"/>
<dbReference type="OrthoDB" id="9922824at2759"/>
<dbReference type="PAN-GO" id="Q7Z7J9">
    <property type="GO annotations" value="3 GO annotations based on evolutionary models"/>
</dbReference>
<dbReference type="PhylomeDB" id="Q7Z7J9"/>
<dbReference type="TreeFam" id="TF333175"/>
<dbReference type="PathwayCommons" id="Q7Z7J9"/>
<dbReference type="SignaLink" id="Q7Z7J9"/>
<dbReference type="BioGRID-ORCS" id="55450">
    <property type="hits" value="20 hits in 1154 CRISPR screens"/>
</dbReference>
<dbReference type="ChiTaRS" id="CAMK2N1">
    <property type="organism name" value="human"/>
</dbReference>
<dbReference type="GenomeRNAi" id="55450"/>
<dbReference type="Pharos" id="Q7Z7J9">
    <property type="development level" value="Tbio"/>
</dbReference>
<dbReference type="PRO" id="PR:Q7Z7J9"/>
<dbReference type="Proteomes" id="UP000005640">
    <property type="component" value="Chromosome 1"/>
</dbReference>
<dbReference type="RNAct" id="Q7Z7J9">
    <property type="molecule type" value="protein"/>
</dbReference>
<dbReference type="Bgee" id="ENSG00000162545">
    <property type="expression patterns" value="Expressed in Brodmann (1909) area 46 and 194 other cell types or tissues"/>
</dbReference>
<dbReference type="GO" id="GO:0030425">
    <property type="term" value="C:dendrite"/>
    <property type="evidence" value="ECO:0007669"/>
    <property type="project" value="UniProtKB-SubCell"/>
</dbReference>
<dbReference type="GO" id="GO:0014069">
    <property type="term" value="C:postsynaptic density"/>
    <property type="evidence" value="ECO:0007669"/>
    <property type="project" value="UniProtKB-SubCell"/>
</dbReference>
<dbReference type="GO" id="GO:0045202">
    <property type="term" value="C:synapse"/>
    <property type="evidence" value="ECO:0000250"/>
    <property type="project" value="UniProtKB"/>
</dbReference>
<dbReference type="GO" id="GO:0008427">
    <property type="term" value="F:calcium-dependent protein kinase inhibitor activity"/>
    <property type="evidence" value="ECO:0000318"/>
    <property type="project" value="GO_Central"/>
</dbReference>
<dbReference type="GO" id="GO:0019901">
    <property type="term" value="F:protein kinase binding"/>
    <property type="evidence" value="ECO:0000318"/>
    <property type="project" value="GO_Central"/>
</dbReference>
<dbReference type="GO" id="GO:0007616">
    <property type="term" value="P:long-term memory"/>
    <property type="evidence" value="ECO:0000250"/>
    <property type="project" value="UniProtKB"/>
</dbReference>
<dbReference type="GO" id="GO:0050729">
    <property type="term" value="P:positive regulation of inflammatory response"/>
    <property type="evidence" value="ECO:0000250"/>
    <property type="project" value="UniProtKB"/>
</dbReference>
<dbReference type="InterPro" id="IPR026779">
    <property type="entry name" value="Camk2n"/>
</dbReference>
<dbReference type="PANTHER" id="PTHR31007">
    <property type="entry name" value="CALCIUM/CALMODULIN-DEPENDENT PROTEIN KINASE II INHIBITOR 2"/>
    <property type="match status" value="1"/>
</dbReference>
<dbReference type="PANTHER" id="PTHR31007:SF3">
    <property type="entry name" value="CALCIUM_CALMODULIN-DEPENDENT PROTEIN KINASE II INHIBITOR 1"/>
    <property type="match status" value="1"/>
</dbReference>
<dbReference type="Pfam" id="PF15170">
    <property type="entry name" value="CaM-KIIN"/>
    <property type="match status" value="1"/>
</dbReference>
<gene>
    <name type="primary">CAMK2N1</name>
</gene>
<evidence type="ECO:0000250" key="1">
    <source>
        <dbReference type="UniProtKB" id="Q6QWF9"/>
    </source>
</evidence>
<evidence type="ECO:0000250" key="2">
    <source>
        <dbReference type="UniProtKB" id="Q9JI15"/>
    </source>
</evidence>
<evidence type="ECO:0000305" key="3"/>
<evidence type="ECO:0000305" key="4">
    <source>
    </source>
</evidence>
<evidence type="ECO:0000305" key="5">
    <source>
    </source>
</evidence>